<keyword id="KW-0227">DNA damage</keyword>
<keyword id="KW-0234">DNA repair</keyword>
<keyword id="KW-0238">DNA-binding</keyword>
<keyword id="KW-0326">Glycosidase</keyword>
<keyword id="KW-0378">Hydrolase</keyword>
<keyword id="KW-0456">Lyase</keyword>
<keyword id="KW-0479">Metal-binding</keyword>
<keyword id="KW-0511">Multifunctional enzyme</keyword>
<keyword id="KW-0862">Zinc</keyword>
<keyword id="KW-0863">Zinc-finger</keyword>
<reference key="1">
    <citation type="journal article" date="2005" name="Genome Res.">
        <title>Comparative and functional genomic analyses of the pathogenicity of phytopathogen Xanthomonas campestris pv. campestris.</title>
        <authorList>
            <person name="Qian W."/>
            <person name="Jia Y."/>
            <person name="Ren S.-X."/>
            <person name="He Y.-Q."/>
            <person name="Feng J.-X."/>
            <person name="Lu L.-F."/>
            <person name="Sun Q."/>
            <person name="Ying G."/>
            <person name="Tang D.-J."/>
            <person name="Tang H."/>
            <person name="Wu W."/>
            <person name="Hao P."/>
            <person name="Wang L."/>
            <person name="Jiang B.-L."/>
            <person name="Zeng S."/>
            <person name="Gu W.-Y."/>
            <person name="Lu G."/>
            <person name="Rong L."/>
            <person name="Tian Y."/>
            <person name="Yao Z."/>
            <person name="Fu G."/>
            <person name="Chen B."/>
            <person name="Fang R."/>
            <person name="Qiang B."/>
            <person name="Chen Z."/>
            <person name="Zhao G.-P."/>
            <person name="Tang J.-L."/>
            <person name="He C."/>
        </authorList>
    </citation>
    <scope>NUCLEOTIDE SEQUENCE [LARGE SCALE GENOMIC DNA]</scope>
    <source>
        <strain>8004</strain>
    </source>
</reference>
<protein>
    <recommendedName>
        <fullName evidence="2">Formamidopyrimidine-DNA glycosylase</fullName>
        <shortName evidence="2">Fapy-DNA glycosylase</shortName>
        <ecNumber evidence="2">3.2.2.23</ecNumber>
    </recommendedName>
    <alternativeName>
        <fullName evidence="2">DNA-(apurinic or apyrimidinic site) lyase MutM</fullName>
        <shortName evidence="2">AP lyase MutM</shortName>
        <ecNumber evidence="2">4.2.99.18</ecNumber>
    </alternativeName>
</protein>
<evidence type="ECO:0000250" key="1"/>
<evidence type="ECO:0000255" key="2">
    <source>
        <dbReference type="HAMAP-Rule" id="MF_00103"/>
    </source>
</evidence>
<name>FPG_XANC8</name>
<accession>Q4UNU6</accession>
<comment type="function">
    <text evidence="2">Involved in base excision repair of DNA damaged by oxidation or by mutagenic agents. Acts as a DNA glycosylase that recognizes and removes damaged bases. Has a preference for oxidized purines, such as 7,8-dihydro-8-oxoguanine (8-oxoG). Has AP (apurinic/apyrimidinic) lyase activity and introduces nicks in the DNA strand. Cleaves the DNA backbone by beta-delta elimination to generate a single-strand break at the site of the removed base with both 3'- and 5'-phosphates.</text>
</comment>
<comment type="catalytic activity">
    <reaction evidence="2">
        <text>Hydrolysis of DNA containing ring-opened 7-methylguanine residues, releasing 2,6-diamino-4-hydroxy-5-(N-methyl)formamidopyrimidine.</text>
        <dbReference type="EC" id="3.2.2.23"/>
    </reaction>
</comment>
<comment type="catalytic activity">
    <reaction evidence="2">
        <text>2'-deoxyribonucleotide-(2'-deoxyribose 5'-phosphate)-2'-deoxyribonucleotide-DNA = a 3'-end 2'-deoxyribonucleotide-(2,3-dehydro-2,3-deoxyribose 5'-phosphate)-DNA + a 5'-end 5'-phospho-2'-deoxyribonucleoside-DNA + H(+)</text>
        <dbReference type="Rhea" id="RHEA:66592"/>
        <dbReference type="Rhea" id="RHEA-COMP:13180"/>
        <dbReference type="Rhea" id="RHEA-COMP:16897"/>
        <dbReference type="Rhea" id="RHEA-COMP:17067"/>
        <dbReference type="ChEBI" id="CHEBI:15378"/>
        <dbReference type="ChEBI" id="CHEBI:136412"/>
        <dbReference type="ChEBI" id="CHEBI:157695"/>
        <dbReference type="ChEBI" id="CHEBI:167181"/>
        <dbReference type="EC" id="4.2.99.18"/>
    </reaction>
</comment>
<comment type="cofactor">
    <cofactor evidence="2">
        <name>Zn(2+)</name>
        <dbReference type="ChEBI" id="CHEBI:29105"/>
    </cofactor>
    <text evidence="2">Binds 1 zinc ion per subunit.</text>
</comment>
<comment type="subunit">
    <text evidence="2">Monomer.</text>
</comment>
<comment type="similarity">
    <text evidence="2">Belongs to the FPG family.</text>
</comment>
<feature type="initiator methionine" description="Removed" evidence="1">
    <location>
        <position position="1"/>
    </location>
</feature>
<feature type="chain" id="PRO_0000228484" description="Formamidopyrimidine-DNA glycosylase">
    <location>
        <begin position="2"/>
        <end position="271"/>
    </location>
</feature>
<feature type="zinc finger region" description="FPG-type" evidence="2">
    <location>
        <begin position="237"/>
        <end position="271"/>
    </location>
</feature>
<feature type="active site" description="Schiff-base intermediate with DNA" evidence="2">
    <location>
        <position position="2"/>
    </location>
</feature>
<feature type="active site" description="Proton donor" evidence="2">
    <location>
        <position position="3"/>
    </location>
</feature>
<feature type="active site" description="Proton donor; for beta-elimination activity" evidence="2">
    <location>
        <position position="58"/>
    </location>
</feature>
<feature type="active site" description="Proton donor; for delta-elimination activity" evidence="2">
    <location>
        <position position="261"/>
    </location>
</feature>
<feature type="binding site" evidence="2">
    <location>
        <position position="92"/>
    </location>
    <ligand>
        <name>DNA</name>
        <dbReference type="ChEBI" id="CHEBI:16991"/>
    </ligand>
</feature>
<feature type="binding site" evidence="2">
    <location>
        <position position="111"/>
    </location>
    <ligand>
        <name>DNA</name>
        <dbReference type="ChEBI" id="CHEBI:16991"/>
    </ligand>
</feature>
<feature type="binding site" evidence="2">
    <location>
        <position position="152"/>
    </location>
    <ligand>
        <name>DNA</name>
        <dbReference type="ChEBI" id="CHEBI:16991"/>
    </ligand>
</feature>
<organism>
    <name type="scientific">Xanthomonas campestris pv. campestris (strain 8004)</name>
    <dbReference type="NCBI Taxonomy" id="314565"/>
    <lineage>
        <taxon>Bacteria</taxon>
        <taxon>Pseudomonadati</taxon>
        <taxon>Pseudomonadota</taxon>
        <taxon>Gammaproteobacteria</taxon>
        <taxon>Lysobacterales</taxon>
        <taxon>Lysobacteraceae</taxon>
        <taxon>Xanthomonas</taxon>
    </lineage>
</organism>
<dbReference type="EC" id="3.2.2.23" evidence="2"/>
<dbReference type="EC" id="4.2.99.18" evidence="2"/>
<dbReference type="EMBL" id="CP000050">
    <property type="protein sequence ID" value="AAY51277.1"/>
    <property type="molecule type" value="Genomic_DNA"/>
</dbReference>
<dbReference type="RefSeq" id="WP_011039216.1">
    <property type="nucleotide sequence ID" value="NZ_CP155948.1"/>
</dbReference>
<dbReference type="SMR" id="Q4UNU6"/>
<dbReference type="KEGG" id="xcb:XC_4239"/>
<dbReference type="HOGENOM" id="CLU_038423_1_1_6"/>
<dbReference type="Proteomes" id="UP000000420">
    <property type="component" value="Chromosome"/>
</dbReference>
<dbReference type="GO" id="GO:0034039">
    <property type="term" value="F:8-oxo-7,8-dihydroguanine DNA N-glycosylase activity"/>
    <property type="evidence" value="ECO:0007669"/>
    <property type="project" value="TreeGrafter"/>
</dbReference>
<dbReference type="GO" id="GO:0140078">
    <property type="term" value="F:class I DNA-(apurinic or apyrimidinic site) endonuclease activity"/>
    <property type="evidence" value="ECO:0007669"/>
    <property type="project" value="UniProtKB-EC"/>
</dbReference>
<dbReference type="GO" id="GO:0003684">
    <property type="term" value="F:damaged DNA binding"/>
    <property type="evidence" value="ECO:0007669"/>
    <property type="project" value="InterPro"/>
</dbReference>
<dbReference type="GO" id="GO:0008270">
    <property type="term" value="F:zinc ion binding"/>
    <property type="evidence" value="ECO:0007669"/>
    <property type="project" value="UniProtKB-UniRule"/>
</dbReference>
<dbReference type="GO" id="GO:0006284">
    <property type="term" value="P:base-excision repair"/>
    <property type="evidence" value="ECO:0007669"/>
    <property type="project" value="InterPro"/>
</dbReference>
<dbReference type="CDD" id="cd08966">
    <property type="entry name" value="EcFpg-like_N"/>
    <property type="match status" value="1"/>
</dbReference>
<dbReference type="FunFam" id="1.10.8.50:FF:000003">
    <property type="entry name" value="Formamidopyrimidine-DNA glycosylase"/>
    <property type="match status" value="1"/>
</dbReference>
<dbReference type="FunFam" id="3.20.190.10:FF:000001">
    <property type="entry name" value="Formamidopyrimidine-DNA glycosylase"/>
    <property type="match status" value="1"/>
</dbReference>
<dbReference type="Gene3D" id="1.10.8.50">
    <property type="match status" value="1"/>
</dbReference>
<dbReference type="Gene3D" id="3.20.190.10">
    <property type="entry name" value="MutM-like, N-terminal"/>
    <property type="match status" value="1"/>
</dbReference>
<dbReference type="HAMAP" id="MF_00103">
    <property type="entry name" value="Fapy_DNA_glycosyl"/>
    <property type="match status" value="1"/>
</dbReference>
<dbReference type="InterPro" id="IPR015886">
    <property type="entry name" value="DNA_glyclase/AP_lyase_DNA-bd"/>
</dbReference>
<dbReference type="InterPro" id="IPR015887">
    <property type="entry name" value="DNA_glyclase_Znf_dom_DNA_BS"/>
</dbReference>
<dbReference type="InterPro" id="IPR020629">
    <property type="entry name" value="Formamido-pyr_DNA_Glyclase"/>
</dbReference>
<dbReference type="InterPro" id="IPR012319">
    <property type="entry name" value="FPG_cat"/>
</dbReference>
<dbReference type="InterPro" id="IPR035937">
    <property type="entry name" value="MutM-like_N-ter"/>
</dbReference>
<dbReference type="InterPro" id="IPR010979">
    <property type="entry name" value="Ribosomal_uS13-like_H2TH"/>
</dbReference>
<dbReference type="InterPro" id="IPR000214">
    <property type="entry name" value="Znf_DNA_glyclase/AP_lyase"/>
</dbReference>
<dbReference type="InterPro" id="IPR010663">
    <property type="entry name" value="Znf_FPG/IleRS"/>
</dbReference>
<dbReference type="NCBIfam" id="TIGR00577">
    <property type="entry name" value="fpg"/>
    <property type="match status" value="1"/>
</dbReference>
<dbReference type="NCBIfam" id="NF002211">
    <property type="entry name" value="PRK01103.1"/>
    <property type="match status" value="1"/>
</dbReference>
<dbReference type="PANTHER" id="PTHR22993">
    <property type="entry name" value="FORMAMIDOPYRIMIDINE-DNA GLYCOSYLASE"/>
    <property type="match status" value="1"/>
</dbReference>
<dbReference type="PANTHER" id="PTHR22993:SF9">
    <property type="entry name" value="FORMAMIDOPYRIMIDINE-DNA GLYCOSYLASE"/>
    <property type="match status" value="1"/>
</dbReference>
<dbReference type="Pfam" id="PF01149">
    <property type="entry name" value="Fapy_DNA_glyco"/>
    <property type="match status" value="1"/>
</dbReference>
<dbReference type="Pfam" id="PF06831">
    <property type="entry name" value="H2TH"/>
    <property type="match status" value="1"/>
</dbReference>
<dbReference type="Pfam" id="PF06827">
    <property type="entry name" value="zf-FPG_IleRS"/>
    <property type="match status" value="1"/>
</dbReference>
<dbReference type="SMART" id="SM00898">
    <property type="entry name" value="Fapy_DNA_glyco"/>
    <property type="match status" value="1"/>
</dbReference>
<dbReference type="SMART" id="SM01232">
    <property type="entry name" value="H2TH"/>
    <property type="match status" value="1"/>
</dbReference>
<dbReference type="SUPFAM" id="SSF57716">
    <property type="entry name" value="Glucocorticoid receptor-like (DNA-binding domain)"/>
    <property type="match status" value="1"/>
</dbReference>
<dbReference type="SUPFAM" id="SSF81624">
    <property type="entry name" value="N-terminal domain of MutM-like DNA repair proteins"/>
    <property type="match status" value="1"/>
</dbReference>
<dbReference type="SUPFAM" id="SSF46946">
    <property type="entry name" value="S13-like H2TH domain"/>
    <property type="match status" value="1"/>
</dbReference>
<dbReference type="PROSITE" id="PS51068">
    <property type="entry name" value="FPG_CAT"/>
    <property type="match status" value="1"/>
</dbReference>
<dbReference type="PROSITE" id="PS01242">
    <property type="entry name" value="ZF_FPG_1"/>
    <property type="match status" value="1"/>
</dbReference>
<dbReference type="PROSITE" id="PS51066">
    <property type="entry name" value="ZF_FPG_2"/>
    <property type="match status" value="1"/>
</dbReference>
<proteinExistence type="inferred from homology"/>
<gene>
    <name evidence="2" type="primary">mutM</name>
    <name evidence="2" type="synonym">fpg</name>
    <name type="ordered locus">XC_4239</name>
</gene>
<sequence>MPELPEVETTLRGLAPHLVGQRIHGVILRRPDLRWPIAAQIEQLLPGATITDVRRRAKYLLIDTDAGGSAVLHLGMSGSLRVLPGDTPPRAHDHVDISLQNGRVLRFNDPRRFGCLLWQRDCETHELLASLGPEPLSAAFTGDYLHALACGRRAAVKTFLMDQAVVVGVGNIYAAESLHRAGISPLREAGKVSRERYRRLADAVKEILAYAIQRGGTTLRDFISPDGAPGYFEQELMVYGREGEACRHCGGELKHATIGQRATVWCAACQR</sequence>